<reference key="1">
    <citation type="submission" date="2007-05" db="EMBL/GenBank/DDBJ databases">
        <title>Complete sequence of Geobacter uraniireducens Rf4.</title>
        <authorList>
            <consortium name="US DOE Joint Genome Institute"/>
            <person name="Copeland A."/>
            <person name="Lucas S."/>
            <person name="Lapidus A."/>
            <person name="Barry K."/>
            <person name="Detter J.C."/>
            <person name="Glavina del Rio T."/>
            <person name="Hammon N."/>
            <person name="Israni S."/>
            <person name="Dalin E."/>
            <person name="Tice H."/>
            <person name="Pitluck S."/>
            <person name="Chertkov O."/>
            <person name="Brettin T."/>
            <person name="Bruce D."/>
            <person name="Han C."/>
            <person name="Schmutz J."/>
            <person name="Larimer F."/>
            <person name="Land M."/>
            <person name="Hauser L."/>
            <person name="Kyrpides N."/>
            <person name="Mikhailova N."/>
            <person name="Shelobolina E."/>
            <person name="Aklujkar M."/>
            <person name="Lovley D."/>
            <person name="Richardson P."/>
        </authorList>
    </citation>
    <scope>NUCLEOTIDE SEQUENCE [LARGE SCALE GENOMIC DNA]</scope>
    <source>
        <strain>ATCC BAA-1134 / JCM 13001 / Rf4</strain>
    </source>
</reference>
<sequence length="219" mass="24023">MNETAKKLLVTGATELGLHLTSAQLGNFYTYASELTKWSKKINLTAIKTDEEIALKHFVDSLTLAKVVKNKGRLLDIGSGGGFPAIPLKIVLHDLHVMSVDAVEKKVIFQRHVARLLHLHDFEAVHVRGEELAKSHAGQFDWIVSRAFSDIPTFAAMTLPLLKSDGRLIAMKGRGGRDEAEAAKGALDDLGARIAELLEFRLPVSGDSRYLVVMEKVAD</sequence>
<proteinExistence type="inferred from homology"/>
<comment type="function">
    <text evidence="1">Specifically methylates the N7 position of guanine in position 527 of 16S rRNA.</text>
</comment>
<comment type="catalytic activity">
    <reaction evidence="1">
        <text>guanosine(527) in 16S rRNA + S-adenosyl-L-methionine = N(7)-methylguanosine(527) in 16S rRNA + S-adenosyl-L-homocysteine</text>
        <dbReference type="Rhea" id="RHEA:42732"/>
        <dbReference type="Rhea" id="RHEA-COMP:10209"/>
        <dbReference type="Rhea" id="RHEA-COMP:10210"/>
        <dbReference type="ChEBI" id="CHEBI:57856"/>
        <dbReference type="ChEBI" id="CHEBI:59789"/>
        <dbReference type="ChEBI" id="CHEBI:74269"/>
        <dbReference type="ChEBI" id="CHEBI:74480"/>
        <dbReference type="EC" id="2.1.1.170"/>
    </reaction>
</comment>
<comment type="subcellular location">
    <subcellularLocation>
        <location evidence="1">Cytoplasm</location>
    </subcellularLocation>
</comment>
<comment type="similarity">
    <text evidence="1">Belongs to the methyltransferase superfamily. RNA methyltransferase RsmG family.</text>
</comment>
<organism>
    <name type="scientific">Geotalea uraniireducens (strain Rf4)</name>
    <name type="common">Geobacter uraniireducens</name>
    <dbReference type="NCBI Taxonomy" id="351605"/>
    <lineage>
        <taxon>Bacteria</taxon>
        <taxon>Pseudomonadati</taxon>
        <taxon>Thermodesulfobacteriota</taxon>
        <taxon>Desulfuromonadia</taxon>
        <taxon>Geobacterales</taxon>
        <taxon>Geobacteraceae</taxon>
        <taxon>Geotalea</taxon>
    </lineage>
</organism>
<gene>
    <name evidence="1" type="primary">rsmG</name>
    <name type="ordered locus">Gura_4426</name>
</gene>
<keyword id="KW-0963">Cytoplasm</keyword>
<keyword id="KW-0489">Methyltransferase</keyword>
<keyword id="KW-1185">Reference proteome</keyword>
<keyword id="KW-0698">rRNA processing</keyword>
<keyword id="KW-0949">S-adenosyl-L-methionine</keyword>
<keyword id="KW-0808">Transferase</keyword>
<dbReference type="EC" id="2.1.1.170" evidence="1"/>
<dbReference type="EMBL" id="CP000698">
    <property type="protein sequence ID" value="ABQ28569.1"/>
    <property type="molecule type" value="Genomic_DNA"/>
</dbReference>
<dbReference type="RefSeq" id="WP_011941195.1">
    <property type="nucleotide sequence ID" value="NC_009483.1"/>
</dbReference>
<dbReference type="SMR" id="A5G9V1"/>
<dbReference type="STRING" id="351605.Gura_4426"/>
<dbReference type="KEGG" id="gur:Gura_4426"/>
<dbReference type="HOGENOM" id="CLU_065341_0_0_7"/>
<dbReference type="OrthoDB" id="9808773at2"/>
<dbReference type="Proteomes" id="UP000006695">
    <property type="component" value="Chromosome"/>
</dbReference>
<dbReference type="GO" id="GO:0005829">
    <property type="term" value="C:cytosol"/>
    <property type="evidence" value="ECO:0007669"/>
    <property type="project" value="TreeGrafter"/>
</dbReference>
<dbReference type="GO" id="GO:0070043">
    <property type="term" value="F:rRNA (guanine-N7-)-methyltransferase activity"/>
    <property type="evidence" value="ECO:0007669"/>
    <property type="project" value="UniProtKB-UniRule"/>
</dbReference>
<dbReference type="CDD" id="cd02440">
    <property type="entry name" value="AdoMet_MTases"/>
    <property type="match status" value="1"/>
</dbReference>
<dbReference type="Gene3D" id="3.40.50.150">
    <property type="entry name" value="Vaccinia Virus protein VP39"/>
    <property type="match status" value="1"/>
</dbReference>
<dbReference type="HAMAP" id="MF_00074">
    <property type="entry name" value="16SrRNA_methyltr_G"/>
    <property type="match status" value="1"/>
</dbReference>
<dbReference type="InterPro" id="IPR003682">
    <property type="entry name" value="rRNA_ssu_MeTfrase_G"/>
</dbReference>
<dbReference type="InterPro" id="IPR029063">
    <property type="entry name" value="SAM-dependent_MTases_sf"/>
</dbReference>
<dbReference type="NCBIfam" id="TIGR00138">
    <property type="entry name" value="rsmG_gidB"/>
    <property type="match status" value="1"/>
</dbReference>
<dbReference type="PANTHER" id="PTHR31760">
    <property type="entry name" value="S-ADENOSYL-L-METHIONINE-DEPENDENT METHYLTRANSFERASES SUPERFAMILY PROTEIN"/>
    <property type="match status" value="1"/>
</dbReference>
<dbReference type="PANTHER" id="PTHR31760:SF0">
    <property type="entry name" value="S-ADENOSYL-L-METHIONINE-DEPENDENT METHYLTRANSFERASES SUPERFAMILY PROTEIN"/>
    <property type="match status" value="1"/>
</dbReference>
<dbReference type="Pfam" id="PF02527">
    <property type="entry name" value="GidB"/>
    <property type="match status" value="1"/>
</dbReference>
<dbReference type="PIRSF" id="PIRSF003078">
    <property type="entry name" value="GidB"/>
    <property type="match status" value="1"/>
</dbReference>
<dbReference type="SUPFAM" id="SSF53335">
    <property type="entry name" value="S-adenosyl-L-methionine-dependent methyltransferases"/>
    <property type="match status" value="1"/>
</dbReference>
<accession>A5G9V1</accession>
<protein>
    <recommendedName>
        <fullName evidence="1">Ribosomal RNA small subunit methyltransferase G</fullName>
        <ecNumber evidence="1">2.1.1.170</ecNumber>
    </recommendedName>
    <alternativeName>
        <fullName evidence="1">16S rRNA 7-methylguanosine methyltransferase</fullName>
        <shortName evidence="1">16S rRNA m7G methyltransferase</shortName>
    </alternativeName>
</protein>
<evidence type="ECO:0000255" key="1">
    <source>
        <dbReference type="HAMAP-Rule" id="MF_00074"/>
    </source>
</evidence>
<feature type="chain" id="PRO_1000075223" description="Ribosomal RNA small subunit methyltransferase G">
    <location>
        <begin position="1"/>
        <end position="219"/>
    </location>
</feature>
<feature type="binding site" evidence="1">
    <location>
        <position position="78"/>
    </location>
    <ligand>
        <name>S-adenosyl-L-methionine</name>
        <dbReference type="ChEBI" id="CHEBI:59789"/>
    </ligand>
</feature>
<feature type="binding site" evidence="1">
    <location>
        <position position="83"/>
    </location>
    <ligand>
        <name>S-adenosyl-L-methionine</name>
        <dbReference type="ChEBI" id="CHEBI:59789"/>
    </ligand>
</feature>
<feature type="binding site" evidence="1">
    <location>
        <begin position="129"/>
        <end position="130"/>
    </location>
    <ligand>
        <name>S-adenosyl-L-methionine</name>
        <dbReference type="ChEBI" id="CHEBI:59789"/>
    </ligand>
</feature>
<feature type="binding site" evidence="1">
    <location>
        <position position="146"/>
    </location>
    <ligand>
        <name>S-adenosyl-L-methionine</name>
        <dbReference type="ChEBI" id="CHEBI:59789"/>
    </ligand>
</feature>
<name>RSMG_GEOUR</name>